<evidence type="ECO:0000255" key="1">
    <source>
        <dbReference type="HAMAP-Rule" id="MF_00344"/>
    </source>
</evidence>
<gene>
    <name evidence="1" type="primary">guaA</name>
    <name type="ordered locus">BCE33L0243</name>
</gene>
<accession>Q63GV4</accession>
<keyword id="KW-0067">ATP-binding</keyword>
<keyword id="KW-0315">Glutamine amidotransferase</keyword>
<keyword id="KW-0332">GMP biosynthesis</keyword>
<keyword id="KW-0436">Ligase</keyword>
<keyword id="KW-0547">Nucleotide-binding</keyword>
<keyword id="KW-0658">Purine biosynthesis</keyword>
<feature type="chain" id="PRO_1000120217" description="GMP synthase [glutamine-hydrolyzing]">
    <location>
        <begin position="1"/>
        <end position="515"/>
    </location>
</feature>
<feature type="domain" description="Glutamine amidotransferase type-1" evidence="1">
    <location>
        <begin position="10"/>
        <end position="200"/>
    </location>
</feature>
<feature type="domain" description="GMPS ATP-PPase" evidence="1">
    <location>
        <begin position="201"/>
        <end position="390"/>
    </location>
</feature>
<feature type="active site" description="Nucleophile" evidence="1">
    <location>
        <position position="87"/>
    </location>
</feature>
<feature type="active site" evidence="1">
    <location>
        <position position="174"/>
    </location>
</feature>
<feature type="active site" evidence="1">
    <location>
        <position position="176"/>
    </location>
</feature>
<feature type="binding site" evidence="1">
    <location>
        <begin position="228"/>
        <end position="234"/>
    </location>
    <ligand>
        <name>ATP</name>
        <dbReference type="ChEBI" id="CHEBI:30616"/>
    </ligand>
</feature>
<protein>
    <recommendedName>
        <fullName evidence="1">GMP synthase [glutamine-hydrolyzing]</fullName>
        <ecNumber evidence="1">6.3.5.2</ecNumber>
    </recommendedName>
    <alternativeName>
        <fullName evidence="1">GMP synthetase</fullName>
    </alternativeName>
    <alternativeName>
        <fullName evidence="1">Glutamine amidotransferase</fullName>
    </alternativeName>
</protein>
<sequence length="515" mass="57579">MIILKKQHDTIIVLDFGSQYNQLIARRIREFGVYSELHPHTITAEEIKAMNPKGIIFSGGPNSVYGEGALHCDEKIFDLGLPIFGICYGMQLMTQQFGGTVERANHREYGKAVLKVENESKLYANLPEEQVVWMSHGDLVTGLPEGFVVDATSESCPIAGMSNEAKNLYGVQFHPEVRHSEHGNDLIKNFVFGVCGCSEGWNMENFIEVELEKIRETVGDKKVLCALSGGVDSSVVAVLIHKAIGDQLTCIFVDHGLLRKGEAEGVMKTFSEGFHMNVIKVDAKERFMNKLKGVEDPEQKRKIIGNEFIYVFDDEASKLEGMDFLAQGTLYTDIVESGTATAQTIKSHHNVGGLPEDMQFKLIEPLNTLFKDEVRVLGSELGIPDEIVWRQPFPGPGLGIRVLGEITEEKLEIVRESDAILREEIIKAGLDREIWQYFTALPGMRSVGVMGDERTYDYTVGIRAVTSIDGMTADWARIPWDVLEKISVRIVNEVKHVNRIVYDVTSKPPATIEWE</sequence>
<organism>
    <name type="scientific">Bacillus cereus (strain ZK / E33L)</name>
    <dbReference type="NCBI Taxonomy" id="288681"/>
    <lineage>
        <taxon>Bacteria</taxon>
        <taxon>Bacillati</taxon>
        <taxon>Bacillota</taxon>
        <taxon>Bacilli</taxon>
        <taxon>Bacillales</taxon>
        <taxon>Bacillaceae</taxon>
        <taxon>Bacillus</taxon>
        <taxon>Bacillus cereus group</taxon>
    </lineage>
</organism>
<comment type="function">
    <text evidence="1">Catalyzes the synthesis of GMP from XMP.</text>
</comment>
<comment type="catalytic activity">
    <reaction evidence="1">
        <text>XMP + L-glutamine + ATP + H2O = GMP + L-glutamate + AMP + diphosphate + 2 H(+)</text>
        <dbReference type="Rhea" id="RHEA:11680"/>
        <dbReference type="ChEBI" id="CHEBI:15377"/>
        <dbReference type="ChEBI" id="CHEBI:15378"/>
        <dbReference type="ChEBI" id="CHEBI:29985"/>
        <dbReference type="ChEBI" id="CHEBI:30616"/>
        <dbReference type="ChEBI" id="CHEBI:33019"/>
        <dbReference type="ChEBI" id="CHEBI:57464"/>
        <dbReference type="ChEBI" id="CHEBI:58115"/>
        <dbReference type="ChEBI" id="CHEBI:58359"/>
        <dbReference type="ChEBI" id="CHEBI:456215"/>
        <dbReference type="EC" id="6.3.5.2"/>
    </reaction>
</comment>
<comment type="pathway">
    <text evidence="1">Purine metabolism; GMP biosynthesis; GMP from XMP (L-Gln route): step 1/1.</text>
</comment>
<comment type="subunit">
    <text evidence="1">Homodimer.</text>
</comment>
<dbReference type="EC" id="6.3.5.2" evidence="1"/>
<dbReference type="EMBL" id="CP000001">
    <property type="protein sequence ID" value="AAU19991.1"/>
    <property type="molecule type" value="Genomic_DNA"/>
</dbReference>
<dbReference type="SMR" id="Q63GV4"/>
<dbReference type="KEGG" id="bcz:BCE33L0243"/>
<dbReference type="PATRIC" id="fig|288681.22.peg.5367"/>
<dbReference type="UniPathway" id="UPA00189">
    <property type="reaction ID" value="UER00296"/>
</dbReference>
<dbReference type="Proteomes" id="UP000002612">
    <property type="component" value="Chromosome"/>
</dbReference>
<dbReference type="GO" id="GO:0005829">
    <property type="term" value="C:cytosol"/>
    <property type="evidence" value="ECO:0007669"/>
    <property type="project" value="TreeGrafter"/>
</dbReference>
<dbReference type="GO" id="GO:0005524">
    <property type="term" value="F:ATP binding"/>
    <property type="evidence" value="ECO:0007669"/>
    <property type="project" value="UniProtKB-UniRule"/>
</dbReference>
<dbReference type="GO" id="GO:0003921">
    <property type="term" value="F:GMP synthase activity"/>
    <property type="evidence" value="ECO:0007669"/>
    <property type="project" value="InterPro"/>
</dbReference>
<dbReference type="CDD" id="cd01742">
    <property type="entry name" value="GATase1_GMP_Synthase"/>
    <property type="match status" value="1"/>
</dbReference>
<dbReference type="CDD" id="cd01997">
    <property type="entry name" value="GMP_synthase_C"/>
    <property type="match status" value="1"/>
</dbReference>
<dbReference type="FunFam" id="3.30.300.10:FF:000002">
    <property type="entry name" value="GMP synthase [glutamine-hydrolyzing]"/>
    <property type="match status" value="1"/>
</dbReference>
<dbReference type="FunFam" id="3.40.50.620:FF:000001">
    <property type="entry name" value="GMP synthase [glutamine-hydrolyzing]"/>
    <property type="match status" value="1"/>
</dbReference>
<dbReference type="FunFam" id="3.40.50.880:FF:000001">
    <property type="entry name" value="GMP synthase [glutamine-hydrolyzing]"/>
    <property type="match status" value="1"/>
</dbReference>
<dbReference type="Gene3D" id="3.30.300.10">
    <property type="match status" value="1"/>
</dbReference>
<dbReference type="Gene3D" id="3.40.50.880">
    <property type="match status" value="1"/>
</dbReference>
<dbReference type="Gene3D" id="3.40.50.620">
    <property type="entry name" value="HUPs"/>
    <property type="match status" value="1"/>
</dbReference>
<dbReference type="HAMAP" id="MF_00344">
    <property type="entry name" value="GMP_synthase"/>
    <property type="match status" value="1"/>
</dbReference>
<dbReference type="InterPro" id="IPR029062">
    <property type="entry name" value="Class_I_gatase-like"/>
</dbReference>
<dbReference type="InterPro" id="IPR017926">
    <property type="entry name" value="GATASE"/>
</dbReference>
<dbReference type="InterPro" id="IPR001674">
    <property type="entry name" value="GMP_synth_C"/>
</dbReference>
<dbReference type="InterPro" id="IPR004739">
    <property type="entry name" value="GMP_synth_GATase"/>
</dbReference>
<dbReference type="InterPro" id="IPR022955">
    <property type="entry name" value="GMP_synthase"/>
</dbReference>
<dbReference type="InterPro" id="IPR025777">
    <property type="entry name" value="GMPS_ATP_PPase_dom"/>
</dbReference>
<dbReference type="InterPro" id="IPR022310">
    <property type="entry name" value="NAD/GMP_synthase"/>
</dbReference>
<dbReference type="InterPro" id="IPR014729">
    <property type="entry name" value="Rossmann-like_a/b/a_fold"/>
</dbReference>
<dbReference type="NCBIfam" id="TIGR00884">
    <property type="entry name" value="guaA_Cterm"/>
    <property type="match status" value="1"/>
</dbReference>
<dbReference type="NCBIfam" id="TIGR00888">
    <property type="entry name" value="guaA_Nterm"/>
    <property type="match status" value="1"/>
</dbReference>
<dbReference type="NCBIfam" id="NF000848">
    <property type="entry name" value="PRK00074.1"/>
    <property type="match status" value="1"/>
</dbReference>
<dbReference type="PANTHER" id="PTHR11922:SF2">
    <property type="entry name" value="GMP SYNTHASE [GLUTAMINE-HYDROLYZING]"/>
    <property type="match status" value="1"/>
</dbReference>
<dbReference type="PANTHER" id="PTHR11922">
    <property type="entry name" value="GMP SYNTHASE-RELATED"/>
    <property type="match status" value="1"/>
</dbReference>
<dbReference type="Pfam" id="PF00117">
    <property type="entry name" value="GATase"/>
    <property type="match status" value="1"/>
</dbReference>
<dbReference type="Pfam" id="PF00958">
    <property type="entry name" value="GMP_synt_C"/>
    <property type="match status" value="1"/>
</dbReference>
<dbReference type="Pfam" id="PF02540">
    <property type="entry name" value="NAD_synthase"/>
    <property type="match status" value="1"/>
</dbReference>
<dbReference type="PRINTS" id="PR00097">
    <property type="entry name" value="ANTSNTHASEII"/>
</dbReference>
<dbReference type="PRINTS" id="PR00099">
    <property type="entry name" value="CPSGATASE"/>
</dbReference>
<dbReference type="PRINTS" id="PR00096">
    <property type="entry name" value="GATASE"/>
</dbReference>
<dbReference type="SUPFAM" id="SSF52402">
    <property type="entry name" value="Adenine nucleotide alpha hydrolases-like"/>
    <property type="match status" value="1"/>
</dbReference>
<dbReference type="SUPFAM" id="SSF52317">
    <property type="entry name" value="Class I glutamine amidotransferase-like"/>
    <property type="match status" value="1"/>
</dbReference>
<dbReference type="SUPFAM" id="SSF54810">
    <property type="entry name" value="GMP synthetase C-terminal dimerisation domain"/>
    <property type="match status" value="1"/>
</dbReference>
<dbReference type="PROSITE" id="PS51273">
    <property type="entry name" value="GATASE_TYPE_1"/>
    <property type="match status" value="1"/>
</dbReference>
<dbReference type="PROSITE" id="PS51553">
    <property type="entry name" value="GMPS_ATP_PPASE"/>
    <property type="match status" value="1"/>
</dbReference>
<name>GUAA_BACCZ</name>
<proteinExistence type="inferred from homology"/>
<reference key="1">
    <citation type="journal article" date="2006" name="J. Bacteriol.">
        <title>Pathogenomic sequence analysis of Bacillus cereus and Bacillus thuringiensis isolates closely related to Bacillus anthracis.</title>
        <authorList>
            <person name="Han C.S."/>
            <person name="Xie G."/>
            <person name="Challacombe J.F."/>
            <person name="Altherr M.R."/>
            <person name="Bhotika S.S."/>
            <person name="Bruce D."/>
            <person name="Campbell C.S."/>
            <person name="Campbell M.L."/>
            <person name="Chen J."/>
            <person name="Chertkov O."/>
            <person name="Cleland C."/>
            <person name="Dimitrijevic M."/>
            <person name="Doggett N.A."/>
            <person name="Fawcett J.J."/>
            <person name="Glavina T."/>
            <person name="Goodwin L.A."/>
            <person name="Hill K.K."/>
            <person name="Hitchcock P."/>
            <person name="Jackson P.J."/>
            <person name="Keim P."/>
            <person name="Kewalramani A.R."/>
            <person name="Longmire J."/>
            <person name="Lucas S."/>
            <person name="Malfatti S."/>
            <person name="McMurry K."/>
            <person name="Meincke L.J."/>
            <person name="Misra M."/>
            <person name="Moseman B.L."/>
            <person name="Mundt M."/>
            <person name="Munk A.C."/>
            <person name="Okinaka R.T."/>
            <person name="Parson-Quintana B."/>
            <person name="Reilly L.P."/>
            <person name="Richardson P."/>
            <person name="Robinson D.L."/>
            <person name="Rubin E."/>
            <person name="Saunders E."/>
            <person name="Tapia R."/>
            <person name="Tesmer J.G."/>
            <person name="Thayer N."/>
            <person name="Thompson L.S."/>
            <person name="Tice H."/>
            <person name="Ticknor L.O."/>
            <person name="Wills P.L."/>
            <person name="Brettin T.S."/>
            <person name="Gilna P."/>
        </authorList>
    </citation>
    <scope>NUCLEOTIDE SEQUENCE [LARGE SCALE GENOMIC DNA]</scope>
    <source>
        <strain>ZK / E33L</strain>
    </source>
</reference>